<sequence>MPFGLGLPEILVIGVIALLIFGPKKLPEMGSALGKAIRGFKSGVSDEPAPQQSASKETAPNPPQSLPSGKDS</sequence>
<name>TATA_GLOVI</name>
<reference key="1">
    <citation type="journal article" date="2003" name="DNA Res.">
        <title>Complete genome structure of Gloeobacter violaceus PCC 7421, a cyanobacterium that lacks thylakoids.</title>
        <authorList>
            <person name="Nakamura Y."/>
            <person name="Kaneko T."/>
            <person name="Sato S."/>
            <person name="Mimuro M."/>
            <person name="Miyashita H."/>
            <person name="Tsuchiya T."/>
            <person name="Sasamoto S."/>
            <person name="Watanabe A."/>
            <person name="Kawashima K."/>
            <person name="Kishida Y."/>
            <person name="Kiyokawa C."/>
            <person name="Kohara M."/>
            <person name="Matsumoto M."/>
            <person name="Matsuno A."/>
            <person name="Nakazaki N."/>
            <person name="Shimpo S."/>
            <person name="Takeuchi C."/>
            <person name="Yamada M."/>
            <person name="Tabata S."/>
        </authorList>
    </citation>
    <scope>NUCLEOTIDE SEQUENCE [LARGE SCALE GENOMIC DNA]</scope>
    <source>
        <strain>ATCC 29082 / PCC 7421</strain>
    </source>
</reference>
<evidence type="ECO:0000255" key="1">
    <source>
        <dbReference type="HAMAP-Rule" id="MF_00236"/>
    </source>
</evidence>
<evidence type="ECO:0000256" key="2">
    <source>
        <dbReference type="SAM" id="MobiDB-lite"/>
    </source>
</evidence>
<feature type="chain" id="PRO_1000058959" description="Sec-independent protein translocase protein TatA">
    <location>
        <begin position="1"/>
        <end position="72"/>
    </location>
</feature>
<feature type="transmembrane region" description="Helical" evidence="1">
    <location>
        <begin position="1"/>
        <end position="21"/>
    </location>
</feature>
<feature type="region of interest" description="Disordered" evidence="2">
    <location>
        <begin position="41"/>
        <end position="72"/>
    </location>
</feature>
<keyword id="KW-0997">Cell inner membrane</keyword>
<keyword id="KW-1003">Cell membrane</keyword>
<keyword id="KW-0472">Membrane</keyword>
<keyword id="KW-0653">Protein transport</keyword>
<keyword id="KW-1185">Reference proteome</keyword>
<keyword id="KW-0811">Translocation</keyword>
<keyword id="KW-0812">Transmembrane</keyword>
<keyword id="KW-1133">Transmembrane helix</keyword>
<keyword id="KW-0813">Transport</keyword>
<accession>Q7NMQ4</accession>
<gene>
    <name evidence="1" type="primary">tatA</name>
    <name type="ordered locus">gsl0711</name>
</gene>
<comment type="function">
    <text evidence="1">Part of the twin-arginine translocation (Tat) system that transports large folded proteins containing a characteristic twin-arginine motif in their signal peptide across membranes. TatA could form the protein-conducting channel of the Tat system.</text>
</comment>
<comment type="subunit">
    <text evidence="1">Forms a complex with TatC.</text>
</comment>
<comment type="subcellular location">
    <subcellularLocation>
        <location evidence="1">Cell inner membrane</location>
        <topology evidence="1">Single-pass membrane protein</topology>
    </subcellularLocation>
</comment>
<comment type="similarity">
    <text evidence="1">Belongs to the TatA/E family.</text>
</comment>
<protein>
    <recommendedName>
        <fullName evidence="1">Sec-independent protein translocase protein TatA</fullName>
    </recommendedName>
</protein>
<proteinExistence type="inferred from homology"/>
<organism>
    <name type="scientific">Gloeobacter violaceus (strain ATCC 29082 / PCC 7421)</name>
    <dbReference type="NCBI Taxonomy" id="251221"/>
    <lineage>
        <taxon>Bacteria</taxon>
        <taxon>Bacillati</taxon>
        <taxon>Cyanobacteriota</taxon>
        <taxon>Cyanophyceae</taxon>
        <taxon>Gloeobacterales</taxon>
        <taxon>Gloeobacteraceae</taxon>
        <taxon>Gloeobacter</taxon>
    </lineage>
</organism>
<dbReference type="EMBL" id="BA000045">
    <property type="protein sequence ID" value="BAC88652.1"/>
    <property type="molecule type" value="Genomic_DNA"/>
</dbReference>
<dbReference type="RefSeq" id="NP_923657.1">
    <property type="nucleotide sequence ID" value="NC_005125.1"/>
</dbReference>
<dbReference type="RefSeq" id="WP_011140713.1">
    <property type="nucleotide sequence ID" value="NC_005125.1"/>
</dbReference>
<dbReference type="SMR" id="Q7NMQ4"/>
<dbReference type="FunCoup" id="Q7NMQ4">
    <property type="interactions" value="11"/>
</dbReference>
<dbReference type="STRING" id="251221.gene:10758187"/>
<dbReference type="EnsemblBacteria" id="BAC88652">
    <property type="protein sequence ID" value="BAC88652"/>
    <property type="gene ID" value="BAC88652"/>
</dbReference>
<dbReference type="KEGG" id="gvi:gsl0711"/>
<dbReference type="eggNOG" id="COG1826">
    <property type="taxonomic scope" value="Bacteria"/>
</dbReference>
<dbReference type="HOGENOM" id="CLU_086034_6_0_3"/>
<dbReference type="InParanoid" id="Q7NMQ4"/>
<dbReference type="OrthoDB" id="9800908at2"/>
<dbReference type="PhylomeDB" id="Q7NMQ4"/>
<dbReference type="Proteomes" id="UP000000557">
    <property type="component" value="Chromosome"/>
</dbReference>
<dbReference type="GO" id="GO:0033281">
    <property type="term" value="C:TAT protein transport complex"/>
    <property type="evidence" value="ECO:0007669"/>
    <property type="project" value="UniProtKB-UniRule"/>
</dbReference>
<dbReference type="GO" id="GO:0008320">
    <property type="term" value="F:protein transmembrane transporter activity"/>
    <property type="evidence" value="ECO:0007669"/>
    <property type="project" value="UniProtKB-UniRule"/>
</dbReference>
<dbReference type="GO" id="GO:0043953">
    <property type="term" value="P:protein transport by the Tat complex"/>
    <property type="evidence" value="ECO:0007669"/>
    <property type="project" value="UniProtKB-UniRule"/>
</dbReference>
<dbReference type="Gene3D" id="1.20.5.3310">
    <property type="match status" value="1"/>
</dbReference>
<dbReference type="HAMAP" id="MF_00236">
    <property type="entry name" value="TatA_E"/>
    <property type="match status" value="1"/>
</dbReference>
<dbReference type="InterPro" id="IPR003369">
    <property type="entry name" value="TatA/B/E"/>
</dbReference>
<dbReference type="InterPro" id="IPR006312">
    <property type="entry name" value="TatA/E"/>
</dbReference>
<dbReference type="NCBIfam" id="NF011430">
    <property type="entry name" value="PRK14861.1"/>
    <property type="match status" value="1"/>
</dbReference>
<dbReference type="NCBIfam" id="TIGR01411">
    <property type="entry name" value="tatAE"/>
    <property type="match status" value="1"/>
</dbReference>
<dbReference type="PANTHER" id="PTHR42982">
    <property type="entry name" value="SEC-INDEPENDENT PROTEIN TRANSLOCASE PROTEIN TATA"/>
    <property type="match status" value="1"/>
</dbReference>
<dbReference type="PANTHER" id="PTHR42982:SF1">
    <property type="entry name" value="SEC-INDEPENDENT PROTEIN TRANSLOCASE PROTEIN TATA"/>
    <property type="match status" value="1"/>
</dbReference>
<dbReference type="Pfam" id="PF02416">
    <property type="entry name" value="TatA_B_E"/>
    <property type="match status" value="1"/>
</dbReference>
<dbReference type="PRINTS" id="PR01506">
    <property type="entry name" value="TATBPROTEIN"/>
</dbReference>